<protein>
    <recommendedName>
        <fullName>Transcription factor HES-3</fullName>
    </recommendedName>
    <alternativeName>
        <fullName>Class B basic helix-loop-helix protein 43</fullName>
        <shortName>bHLHb43</shortName>
    </alternativeName>
    <alternativeName>
        <fullName>Hairy and enhancer of split 3</fullName>
    </alternativeName>
</protein>
<comment type="function">
    <text evidence="1">Transcriptional repressor of genes that require a bHLH protein for their transcription.</text>
</comment>
<comment type="subunit">
    <text evidence="1">Transcription repression requires formation of a complex with a corepressor protein of the Groucho/TLE family.</text>
</comment>
<comment type="subcellular location">
    <subcellularLocation>
        <location evidence="2">Nucleus</location>
    </subcellularLocation>
</comment>
<comment type="domain">
    <text>Has a particular type of basic domain (presence of a helix-interrupting proline) that binds to the N-box (CACNAG), rather than the canonical E-box (CANNTG).</text>
</comment>
<comment type="domain">
    <text evidence="1">The C-terminal WRPW motif is a transcriptional repression domain necessary for the interaction with Groucho/TLE family members, transcriptional corepressors recruited to specific target DNA by Hairy-related proteins.</text>
</comment>
<feature type="chain" id="PRO_0000269174" description="Transcription factor HES-3">
    <location>
        <begin position="1"/>
        <end position="186"/>
    </location>
</feature>
<feature type="domain" description="bHLH" evidence="2">
    <location>
        <begin position="1"/>
        <end position="49"/>
    </location>
</feature>
<feature type="domain" description="Orange">
    <location>
        <begin position="65"/>
        <end position="99"/>
    </location>
</feature>
<feature type="region of interest" description="Disordered" evidence="3">
    <location>
        <begin position="128"/>
        <end position="186"/>
    </location>
</feature>
<feature type="short sequence motif" description="WRPW motif">
    <location>
        <begin position="175"/>
        <end position="178"/>
    </location>
</feature>
<feature type="compositionally biased region" description="Low complexity" evidence="3">
    <location>
        <begin position="142"/>
        <end position="153"/>
    </location>
</feature>
<organism>
    <name type="scientific">Homo sapiens</name>
    <name type="common">Human</name>
    <dbReference type="NCBI Taxonomy" id="9606"/>
    <lineage>
        <taxon>Eukaryota</taxon>
        <taxon>Metazoa</taxon>
        <taxon>Chordata</taxon>
        <taxon>Craniata</taxon>
        <taxon>Vertebrata</taxon>
        <taxon>Euteleostomi</taxon>
        <taxon>Mammalia</taxon>
        <taxon>Eutheria</taxon>
        <taxon>Euarchontoglires</taxon>
        <taxon>Primates</taxon>
        <taxon>Haplorrhini</taxon>
        <taxon>Catarrhini</taxon>
        <taxon>Hominidae</taxon>
        <taxon>Homo</taxon>
    </lineage>
</organism>
<name>HES3_HUMAN</name>
<sequence length="186" mass="19968">MEKKRRARINVSLEQLKSLLEKHYSHQIRKRKLEKADILELSVKYMRSLQNSLQGLWPVPRGAEQPSGFRSCLPGVSQLLRRGDEVGSGLRCPLVPESAAGSTMDSAGLGQEAPALFRPCTPAVWAPAPAAGGPRSPPPLLLLPESLPGSSASVPPPQPASSRCAESPGLGLRVWRPWGSPGDDLN</sequence>
<gene>
    <name type="primary">HES3</name>
    <name type="synonym">BHLHB43</name>
</gene>
<dbReference type="EMBL" id="AL031847">
    <property type="status" value="NOT_ANNOTATED_CDS"/>
    <property type="molecule type" value="Genomic_DNA"/>
</dbReference>
<dbReference type="CCDS" id="CCDS41238.1"/>
<dbReference type="RefSeq" id="NP_001019769.1">
    <property type="nucleotide sequence ID" value="NM_001024598.4"/>
</dbReference>
<dbReference type="SMR" id="Q5TGS1"/>
<dbReference type="BioGRID" id="133754">
    <property type="interactions" value="7"/>
</dbReference>
<dbReference type="FunCoup" id="Q5TGS1">
    <property type="interactions" value="427"/>
</dbReference>
<dbReference type="IntAct" id="Q5TGS1">
    <property type="interactions" value="3"/>
</dbReference>
<dbReference type="STRING" id="9606.ENSP00000367130"/>
<dbReference type="BioMuta" id="HES3"/>
<dbReference type="DMDM" id="74746514"/>
<dbReference type="PaxDb" id="9606-ENSP00000367130"/>
<dbReference type="PeptideAtlas" id="Q5TGS1"/>
<dbReference type="ProteomicsDB" id="65128"/>
<dbReference type="Antibodypedia" id="62181">
    <property type="antibodies" value="52 antibodies from 13 providers"/>
</dbReference>
<dbReference type="DNASU" id="390992"/>
<dbReference type="Ensembl" id="ENST00000377898.4">
    <property type="protein sequence ID" value="ENSP00000367130.3"/>
    <property type="gene ID" value="ENSG00000173673.9"/>
</dbReference>
<dbReference type="GeneID" id="390992"/>
<dbReference type="KEGG" id="hsa:390992"/>
<dbReference type="MANE-Select" id="ENST00000377898.4">
    <property type="protein sequence ID" value="ENSP00000367130.3"/>
    <property type="RefSeq nucleotide sequence ID" value="NM_001024598.4"/>
    <property type="RefSeq protein sequence ID" value="NP_001019769.1"/>
</dbReference>
<dbReference type="UCSC" id="uc009vly.2">
    <property type="organism name" value="human"/>
</dbReference>
<dbReference type="AGR" id="HGNC:26226"/>
<dbReference type="CTD" id="390992"/>
<dbReference type="DisGeNET" id="390992"/>
<dbReference type="GeneCards" id="HES3"/>
<dbReference type="HGNC" id="HGNC:26226">
    <property type="gene designation" value="HES3"/>
</dbReference>
<dbReference type="HPA" id="ENSG00000173673">
    <property type="expression patterns" value="Not detected"/>
</dbReference>
<dbReference type="MIM" id="609971">
    <property type="type" value="gene"/>
</dbReference>
<dbReference type="neXtProt" id="NX_Q5TGS1"/>
<dbReference type="OpenTargets" id="ENSG00000173673"/>
<dbReference type="PharmGKB" id="PA142671692"/>
<dbReference type="VEuPathDB" id="HostDB:ENSG00000173673"/>
<dbReference type="eggNOG" id="KOG4304">
    <property type="taxonomic scope" value="Eukaryota"/>
</dbReference>
<dbReference type="GeneTree" id="ENSGT00730000111482"/>
<dbReference type="HOGENOM" id="CLU_068550_4_0_1"/>
<dbReference type="InParanoid" id="Q5TGS1"/>
<dbReference type="OMA" id="LRCPLAH"/>
<dbReference type="OrthoDB" id="6085656at2759"/>
<dbReference type="PAN-GO" id="Q5TGS1">
    <property type="GO annotations" value="9 GO annotations based on evolutionary models"/>
</dbReference>
<dbReference type="PhylomeDB" id="Q5TGS1"/>
<dbReference type="TreeFam" id="TF351373"/>
<dbReference type="PathwayCommons" id="Q5TGS1"/>
<dbReference type="BioGRID-ORCS" id="390992">
    <property type="hits" value="24 hits in 1169 CRISPR screens"/>
</dbReference>
<dbReference type="GenomeRNAi" id="390992"/>
<dbReference type="Pharos" id="Q5TGS1">
    <property type="development level" value="Tbio"/>
</dbReference>
<dbReference type="PRO" id="PR:Q5TGS1"/>
<dbReference type="Proteomes" id="UP000005640">
    <property type="component" value="Chromosome 1"/>
</dbReference>
<dbReference type="RNAct" id="Q5TGS1">
    <property type="molecule type" value="protein"/>
</dbReference>
<dbReference type="Bgee" id="ENSG00000173673">
    <property type="expression patterns" value="Expressed in olfactory segment of nasal mucosa"/>
</dbReference>
<dbReference type="GO" id="GO:0000785">
    <property type="term" value="C:chromatin"/>
    <property type="evidence" value="ECO:0000247"/>
    <property type="project" value="NTNU_SB"/>
</dbReference>
<dbReference type="GO" id="GO:0005634">
    <property type="term" value="C:nucleus"/>
    <property type="evidence" value="ECO:0000318"/>
    <property type="project" value="GO_Central"/>
</dbReference>
<dbReference type="GO" id="GO:0000981">
    <property type="term" value="F:DNA-binding transcription factor activity, RNA polymerase II-specific"/>
    <property type="evidence" value="ECO:0000247"/>
    <property type="project" value="NTNU_SB"/>
</dbReference>
<dbReference type="GO" id="GO:0046983">
    <property type="term" value="F:protein dimerization activity"/>
    <property type="evidence" value="ECO:0007669"/>
    <property type="project" value="InterPro"/>
</dbReference>
<dbReference type="GO" id="GO:0000978">
    <property type="term" value="F:RNA polymerase II cis-regulatory region sequence-specific DNA binding"/>
    <property type="evidence" value="ECO:0000318"/>
    <property type="project" value="GO_Central"/>
</dbReference>
<dbReference type="GO" id="GO:0050767">
    <property type="term" value="P:regulation of neurogenesis"/>
    <property type="evidence" value="ECO:0000318"/>
    <property type="project" value="GO_Central"/>
</dbReference>
<dbReference type="CDD" id="cd18933">
    <property type="entry name" value="bHLH-O_HES3"/>
    <property type="match status" value="1"/>
</dbReference>
<dbReference type="FunFam" id="4.10.280.10:FF:000077">
    <property type="entry name" value="transcription factor HES-3 isoform X2"/>
    <property type="match status" value="1"/>
</dbReference>
<dbReference type="Gene3D" id="4.10.280.10">
    <property type="entry name" value="Helix-loop-helix DNA-binding domain"/>
    <property type="match status" value="1"/>
</dbReference>
<dbReference type="InterPro" id="IPR011598">
    <property type="entry name" value="bHLH_dom"/>
</dbReference>
<dbReference type="InterPro" id="IPR050370">
    <property type="entry name" value="HES_HEY"/>
</dbReference>
<dbReference type="InterPro" id="IPR036638">
    <property type="entry name" value="HLH_DNA-bd_sf"/>
</dbReference>
<dbReference type="PANTHER" id="PTHR10985">
    <property type="entry name" value="BASIC HELIX-LOOP-HELIX TRANSCRIPTION FACTOR, HES-RELATED"/>
    <property type="match status" value="1"/>
</dbReference>
<dbReference type="Pfam" id="PF00010">
    <property type="entry name" value="HLH"/>
    <property type="match status" value="1"/>
</dbReference>
<dbReference type="SMART" id="SM00353">
    <property type="entry name" value="HLH"/>
    <property type="match status" value="1"/>
</dbReference>
<dbReference type="SUPFAM" id="SSF47459">
    <property type="entry name" value="HLH, helix-loop-helix DNA-binding domain"/>
    <property type="match status" value="1"/>
</dbReference>
<dbReference type="PROSITE" id="PS50888">
    <property type="entry name" value="BHLH"/>
    <property type="match status" value="1"/>
</dbReference>
<keyword id="KW-0238">DNA-binding</keyword>
<keyword id="KW-0539">Nucleus</keyword>
<keyword id="KW-1185">Reference proteome</keyword>
<keyword id="KW-0678">Repressor</keyword>
<keyword id="KW-0804">Transcription</keyword>
<keyword id="KW-0805">Transcription regulation</keyword>
<reference key="1">
    <citation type="journal article" date="2006" name="Nature">
        <title>The DNA sequence and biological annotation of human chromosome 1.</title>
        <authorList>
            <person name="Gregory S.G."/>
            <person name="Barlow K.F."/>
            <person name="McLay K.E."/>
            <person name="Kaul R."/>
            <person name="Swarbreck D."/>
            <person name="Dunham A."/>
            <person name="Scott C.E."/>
            <person name="Howe K.L."/>
            <person name="Woodfine K."/>
            <person name="Spencer C.C.A."/>
            <person name="Jones M.C."/>
            <person name="Gillson C."/>
            <person name="Searle S."/>
            <person name="Zhou Y."/>
            <person name="Kokocinski F."/>
            <person name="McDonald L."/>
            <person name="Evans R."/>
            <person name="Phillips K."/>
            <person name="Atkinson A."/>
            <person name="Cooper R."/>
            <person name="Jones C."/>
            <person name="Hall R.E."/>
            <person name="Andrews T.D."/>
            <person name="Lloyd C."/>
            <person name="Ainscough R."/>
            <person name="Almeida J.P."/>
            <person name="Ambrose K.D."/>
            <person name="Anderson F."/>
            <person name="Andrew R.W."/>
            <person name="Ashwell R.I.S."/>
            <person name="Aubin K."/>
            <person name="Babbage A.K."/>
            <person name="Bagguley C.L."/>
            <person name="Bailey J."/>
            <person name="Beasley H."/>
            <person name="Bethel G."/>
            <person name="Bird C.P."/>
            <person name="Bray-Allen S."/>
            <person name="Brown J.Y."/>
            <person name="Brown A.J."/>
            <person name="Buckley D."/>
            <person name="Burton J."/>
            <person name="Bye J."/>
            <person name="Carder C."/>
            <person name="Chapman J.C."/>
            <person name="Clark S.Y."/>
            <person name="Clarke G."/>
            <person name="Clee C."/>
            <person name="Cobley V."/>
            <person name="Collier R.E."/>
            <person name="Corby N."/>
            <person name="Coville G.J."/>
            <person name="Davies J."/>
            <person name="Deadman R."/>
            <person name="Dunn M."/>
            <person name="Earthrowl M."/>
            <person name="Ellington A.G."/>
            <person name="Errington H."/>
            <person name="Frankish A."/>
            <person name="Frankland J."/>
            <person name="French L."/>
            <person name="Garner P."/>
            <person name="Garnett J."/>
            <person name="Gay L."/>
            <person name="Ghori M.R.J."/>
            <person name="Gibson R."/>
            <person name="Gilby L.M."/>
            <person name="Gillett W."/>
            <person name="Glithero R.J."/>
            <person name="Grafham D.V."/>
            <person name="Griffiths C."/>
            <person name="Griffiths-Jones S."/>
            <person name="Grocock R."/>
            <person name="Hammond S."/>
            <person name="Harrison E.S.I."/>
            <person name="Hart E."/>
            <person name="Haugen E."/>
            <person name="Heath P.D."/>
            <person name="Holmes S."/>
            <person name="Holt K."/>
            <person name="Howden P.J."/>
            <person name="Hunt A.R."/>
            <person name="Hunt S.E."/>
            <person name="Hunter G."/>
            <person name="Isherwood J."/>
            <person name="James R."/>
            <person name="Johnson C."/>
            <person name="Johnson D."/>
            <person name="Joy A."/>
            <person name="Kay M."/>
            <person name="Kershaw J.K."/>
            <person name="Kibukawa M."/>
            <person name="Kimberley A.M."/>
            <person name="King A."/>
            <person name="Knights A.J."/>
            <person name="Lad H."/>
            <person name="Laird G."/>
            <person name="Lawlor S."/>
            <person name="Leongamornlert D.A."/>
            <person name="Lloyd D.M."/>
            <person name="Loveland J."/>
            <person name="Lovell J."/>
            <person name="Lush M.J."/>
            <person name="Lyne R."/>
            <person name="Martin S."/>
            <person name="Mashreghi-Mohammadi M."/>
            <person name="Matthews L."/>
            <person name="Matthews N.S.W."/>
            <person name="McLaren S."/>
            <person name="Milne S."/>
            <person name="Mistry S."/>
            <person name="Moore M.J.F."/>
            <person name="Nickerson T."/>
            <person name="O'Dell C.N."/>
            <person name="Oliver K."/>
            <person name="Palmeiri A."/>
            <person name="Palmer S.A."/>
            <person name="Parker A."/>
            <person name="Patel D."/>
            <person name="Pearce A.V."/>
            <person name="Peck A.I."/>
            <person name="Pelan S."/>
            <person name="Phelps K."/>
            <person name="Phillimore B.J."/>
            <person name="Plumb R."/>
            <person name="Rajan J."/>
            <person name="Raymond C."/>
            <person name="Rouse G."/>
            <person name="Saenphimmachak C."/>
            <person name="Sehra H.K."/>
            <person name="Sheridan E."/>
            <person name="Shownkeen R."/>
            <person name="Sims S."/>
            <person name="Skuce C.D."/>
            <person name="Smith M."/>
            <person name="Steward C."/>
            <person name="Subramanian S."/>
            <person name="Sycamore N."/>
            <person name="Tracey A."/>
            <person name="Tromans A."/>
            <person name="Van Helmond Z."/>
            <person name="Wall M."/>
            <person name="Wallis J.M."/>
            <person name="White S."/>
            <person name="Whitehead S.L."/>
            <person name="Wilkinson J.E."/>
            <person name="Willey D.L."/>
            <person name="Williams H."/>
            <person name="Wilming L."/>
            <person name="Wray P.W."/>
            <person name="Wu Z."/>
            <person name="Coulson A."/>
            <person name="Vaudin M."/>
            <person name="Sulston J.E."/>
            <person name="Durbin R.M."/>
            <person name="Hubbard T."/>
            <person name="Wooster R."/>
            <person name="Dunham I."/>
            <person name="Carter N.P."/>
            <person name="McVean G."/>
            <person name="Ross M.T."/>
            <person name="Harrow J."/>
            <person name="Olson M.V."/>
            <person name="Beck S."/>
            <person name="Rogers J."/>
            <person name="Bentley D.R."/>
        </authorList>
    </citation>
    <scope>NUCLEOTIDE SEQUENCE [LARGE SCALE GENOMIC DNA]</scope>
</reference>
<reference key="2">
    <citation type="journal article" date="2004" name="Int. J. Oncol.">
        <title>Identification and characterization of human HES2, HES3, and HES5 genes in silico.</title>
        <authorList>
            <person name="Katoh M."/>
            <person name="Katoh M."/>
        </authorList>
    </citation>
    <scope>IDENTIFICATION</scope>
</reference>
<proteinExistence type="inferred from homology"/>
<evidence type="ECO:0000250" key="1"/>
<evidence type="ECO:0000255" key="2">
    <source>
        <dbReference type="PROSITE-ProRule" id="PRU00981"/>
    </source>
</evidence>
<evidence type="ECO:0000256" key="3">
    <source>
        <dbReference type="SAM" id="MobiDB-lite"/>
    </source>
</evidence>
<accession>Q5TGS1</accession>
<accession>Q5TGS0</accession>